<gene>
    <name evidence="1" type="primary">rplB</name>
    <name type="ordered locus">COXBURSA331_A0340</name>
</gene>
<evidence type="ECO:0000255" key="1">
    <source>
        <dbReference type="HAMAP-Rule" id="MF_01320"/>
    </source>
</evidence>
<evidence type="ECO:0000256" key="2">
    <source>
        <dbReference type="SAM" id="MobiDB-lite"/>
    </source>
</evidence>
<evidence type="ECO:0000305" key="3"/>
<proteinExistence type="inferred from homology"/>
<comment type="function">
    <text evidence="1">One of the primary rRNA binding proteins. Required for association of the 30S and 50S subunits to form the 70S ribosome, for tRNA binding and peptide bond formation. It has been suggested to have peptidyltransferase activity; this is somewhat controversial. Makes several contacts with the 16S rRNA in the 70S ribosome.</text>
</comment>
<comment type="subunit">
    <text evidence="1">Part of the 50S ribosomal subunit. Forms a bridge to the 30S subunit in the 70S ribosome.</text>
</comment>
<comment type="similarity">
    <text evidence="1">Belongs to the universal ribosomal protein uL2 family.</text>
</comment>
<dbReference type="EMBL" id="CP000890">
    <property type="protein sequence ID" value="ABX78199.1"/>
    <property type="molecule type" value="Genomic_DNA"/>
</dbReference>
<dbReference type="RefSeq" id="WP_010957456.1">
    <property type="nucleotide sequence ID" value="NC_010117.1"/>
</dbReference>
<dbReference type="SMR" id="A9NAM7"/>
<dbReference type="KEGG" id="cbs:COXBURSA331_A0340"/>
<dbReference type="HOGENOM" id="CLU_036235_2_1_6"/>
<dbReference type="GO" id="GO:0015934">
    <property type="term" value="C:large ribosomal subunit"/>
    <property type="evidence" value="ECO:0007669"/>
    <property type="project" value="InterPro"/>
</dbReference>
<dbReference type="GO" id="GO:0019843">
    <property type="term" value="F:rRNA binding"/>
    <property type="evidence" value="ECO:0007669"/>
    <property type="project" value="UniProtKB-UniRule"/>
</dbReference>
<dbReference type="GO" id="GO:0003735">
    <property type="term" value="F:structural constituent of ribosome"/>
    <property type="evidence" value="ECO:0007669"/>
    <property type="project" value="InterPro"/>
</dbReference>
<dbReference type="GO" id="GO:0016740">
    <property type="term" value="F:transferase activity"/>
    <property type="evidence" value="ECO:0007669"/>
    <property type="project" value="InterPro"/>
</dbReference>
<dbReference type="GO" id="GO:0002181">
    <property type="term" value="P:cytoplasmic translation"/>
    <property type="evidence" value="ECO:0007669"/>
    <property type="project" value="TreeGrafter"/>
</dbReference>
<dbReference type="FunFam" id="2.30.30.30:FF:000001">
    <property type="entry name" value="50S ribosomal protein L2"/>
    <property type="match status" value="1"/>
</dbReference>
<dbReference type="FunFam" id="2.40.50.140:FF:000003">
    <property type="entry name" value="50S ribosomal protein L2"/>
    <property type="match status" value="1"/>
</dbReference>
<dbReference type="FunFam" id="4.10.950.10:FF:000001">
    <property type="entry name" value="50S ribosomal protein L2"/>
    <property type="match status" value="1"/>
</dbReference>
<dbReference type="Gene3D" id="2.30.30.30">
    <property type="match status" value="1"/>
</dbReference>
<dbReference type="Gene3D" id="2.40.50.140">
    <property type="entry name" value="Nucleic acid-binding proteins"/>
    <property type="match status" value="1"/>
</dbReference>
<dbReference type="Gene3D" id="4.10.950.10">
    <property type="entry name" value="Ribosomal protein L2, domain 3"/>
    <property type="match status" value="1"/>
</dbReference>
<dbReference type="HAMAP" id="MF_01320_B">
    <property type="entry name" value="Ribosomal_uL2_B"/>
    <property type="match status" value="1"/>
</dbReference>
<dbReference type="InterPro" id="IPR012340">
    <property type="entry name" value="NA-bd_OB-fold"/>
</dbReference>
<dbReference type="InterPro" id="IPR014722">
    <property type="entry name" value="Rib_uL2_dom2"/>
</dbReference>
<dbReference type="InterPro" id="IPR002171">
    <property type="entry name" value="Ribosomal_uL2"/>
</dbReference>
<dbReference type="InterPro" id="IPR005880">
    <property type="entry name" value="Ribosomal_uL2_bac/org-type"/>
</dbReference>
<dbReference type="InterPro" id="IPR022669">
    <property type="entry name" value="Ribosomal_uL2_C"/>
</dbReference>
<dbReference type="InterPro" id="IPR022671">
    <property type="entry name" value="Ribosomal_uL2_CS"/>
</dbReference>
<dbReference type="InterPro" id="IPR014726">
    <property type="entry name" value="Ribosomal_uL2_dom3"/>
</dbReference>
<dbReference type="InterPro" id="IPR022666">
    <property type="entry name" value="Ribosomal_uL2_RNA-bd_dom"/>
</dbReference>
<dbReference type="InterPro" id="IPR008991">
    <property type="entry name" value="Translation_prot_SH3-like_sf"/>
</dbReference>
<dbReference type="NCBIfam" id="TIGR01171">
    <property type="entry name" value="rplB_bact"/>
    <property type="match status" value="1"/>
</dbReference>
<dbReference type="PANTHER" id="PTHR13691:SF5">
    <property type="entry name" value="LARGE RIBOSOMAL SUBUNIT PROTEIN UL2M"/>
    <property type="match status" value="1"/>
</dbReference>
<dbReference type="PANTHER" id="PTHR13691">
    <property type="entry name" value="RIBOSOMAL PROTEIN L2"/>
    <property type="match status" value="1"/>
</dbReference>
<dbReference type="Pfam" id="PF00181">
    <property type="entry name" value="Ribosomal_L2"/>
    <property type="match status" value="1"/>
</dbReference>
<dbReference type="Pfam" id="PF03947">
    <property type="entry name" value="Ribosomal_L2_C"/>
    <property type="match status" value="1"/>
</dbReference>
<dbReference type="PIRSF" id="PIRSF002158">
    <property type="entry name" value="Ribosomal_L2"/>
    <property type="match status" value="1"/>
</dbReference>
<dbReference type="SMART" id="SM01383">
    <property type="entry name" value="Ribosomal_L2"/>
    <property type="match status" value="1"/>
</dbReference>
<dbReference type="SMART" id="SM01382">
    <property type="entry name" value="Ribosomal_L2_C"/>
    <property type="match status" value="1"/>
</dbReference>
<dbReference type="SUPFAM" id="SSF50249">
    <property type="entry name" value="Nucleic acid-binding proteins"/>
    <property type="match status" value="1"/>
</dbReference>
<dbReference type="SUPFAM" id="SSF50104">
    <property type="entry name" value="Translation proteins SH3-like domain"/>
    <property type="match status" value="1"/>
</dbReference>
<dbReference type="PROSITE" id="PS00467">
    <property type="entry name" value="RIBOSOMAL_L2"/>
    <property type="match status" value="1"/>
</dbReference>
<name>RL2_COXBR</name>
<sequence length="275" mass="30411">MALVKTKPTSPGRRFVVKVVHPELHKGDPYAPLVESKNRINSRNNQGRITVRRRGGGHKRNYRIIDFKRDKEGIEGKVERLEYDPNRSAHIALVLYPDGERRYIIAPKGVHKGSKVVSGREAPIRPGNCLPLQNIPLGATIHNIELKPGKGAQLVRSAGASAQLAAKEGIYAIIRMRSGETRKILAVCRACIGEVSNSEHNLRSLGKAGAKRWRGRRPTVRGVAMNPVDHPHGGGEGKTSGGRHPVSPTGKPTKGYKTRRNKRTSNMIIRDRRKK</sequence>
<feature type="chain" id="PRO_1000165740" description="Large ribosomal subunit protein uL2">
    <location>
        <begin position="1"/>
        <end position="275"/>
    </location>
</feature>
<feature type="region of interest" description="Disordered" evidence="2">
    <location>
        <begin position="208"/>
        <end position="275"/>
    </location>
</feature>
<feature type="compositionally biased region" description="Basic residues" evidence="2">
    <location>
        <begin position="209"/>
        <end position="219"/>
    </location>
</feature>
<feature type="compositionally biased region" description="Basic residues" evidence="2">
    <location>
        <begin position="254"/>
        <end position="263"/>
    </location>
</feature>
<reference key="1">
    <citation type="submission" date="2007-11" db="EMBL/GenBank/DDBJ databases">
        <title>Genome sequencing of phylogenetically and phenotypically diverse Coxiella burnetii isolates.</title>
        <authorList>
            <person name="Seshadri R."/>
            <person name="Samuel J.E."/>
        </authorList>
    </citation>
    <scope>NUCLEOTIDE SEQUENCE [LARGE SCALE GENOMIC DNA]</scope>
    <source>
        <strain>RSA 331 / Henzerling II</strain>
    </source>
</reference>
<accession>A9NAM7</accession>
<organism>
    <name type="scientific">Coxiella burnetii (strain RSA 331 / Henzerling II)</name>
    <dbReference type="NCBI Taxonomy" id="360115"/>
    <lineage>
        <taxon>Bacteria</taxon>
        <taxon>Pseudomonadati</taxon>
        <taxon>Pseudomonadota</taxon>
        <taxon>Gammaproteobacteria</taxon>
        <taxon>Legionellales</taxon>
        <taxon>Coxiellaceae</taxon>
        <taxon>Coxiella</taxon>
    </lineage>
</organism>
<keyword id="KW-0687">Ribonucleoprotein</keyword>
<keyword id="KW-0689">Ribosomal protein</keyword>
<keyword id="KW-0694">RNA-binding</keyword>
<keyword id="KW-0699">rRNA-binding</keyword>
<protein>
    <recommendedName>
        <fullName evidence="1">Large ribosomal subunit protein uL2</fullName>
    </recommendedName>
    <alternativeName>
        <fullName evidence="3">50S ribosomal protein L2</fullName>
    </alternativeName>
</protein>